<sequence>MNRLNIAVSCLATALLFGCEALHPPAPGDNPDYAPTYPVTPDPKELRKVSGAIYSSETALPLFETPRARHPGDILTVFLIEKTDAQKNATTTQRKNDTTKITNKLFLGRPISLGSGYSMDFDLDNQRQFNGEGRSIQNNKLAGSISVTVAKVLANGNMVVQGEKWVRINQGNEFVRLSGIVRPQDIKADNTITSDRIANARISYGGTGQINNTNAQGWLSRILWGPLFPT</sequence>
<evidence type="ECO:0000255" key="1">
    <source>
        <dbReference type="HAMAP-Rule" id="MF_00415"/>
    </source>
</evidence>
<comment type="function">
    <text evidence="1">Assembles around the rod to form the L-ring and probably protects the motor/basal body from shearing forces during rotation.</text>
</comment>
<comment type="subunit">
    <text evidence="1">The basal body constitutes a major portion of the flagellar organelle and consists of four rings (L,P,S, and M) mounted on a central rod.</text>
</comment>
<comment type="subcellular location">
    <subcellularLocation>
        <location evidence="1">Cell outer membrane</location>
        <topology evidence="1">Lipid-anchor</topology>
    </subcellularLocation>
    <subcellularLocation>
        <location evidence="1">Bacterial flagellum basal body</location>
    </subcellularLocation>
</comment>
<comment type="similarity">
    <text evidence="1">Belongs to the FlgH family.</text>
</comment>
<gene>
    <name evidence="1" type="primary">flgH</name>
    <name type="ordered locus">lpp1230</name>
</gene>
<accession>Q5X5U0</accession>
<name>FLGH_LEGPA</name>
<protein>
    <recommendedName>
        <fullName evidence="1">Flagellar L-ring protein</fullName>
    </recommendedName>
    <alternativeName>
        <fullName evidence="1">Basal body L-ring protein</fullName>
    </alternativeName>
</protein>
<feature type="signal peptide" evidence="1">
    <location>
        <begin position="1"/>
        <end position="18"/>
    </location>
</feature>
<feature type="chain" id="PRO_0000009453" description="Flagellar L-ring protein">
    <location>
        <begin position="19"/>
        <end position="230"/>
    </location>
</feature>
<feature type="lipid moiety-binding region" description="N-palmitoyl cysteine" evidence="1">
    <location>
        <position position="19"/>
    </location>
</feature>
<feature type="lipid moiety-binding region" description="S-diacylglycerol cysteine" evidence="1">
    <location>
        <position position="19"/>
    </location>
</feature>
<proteinExistence type="inferred from homology"/>
<organism>
    <name type="scientific">Legionella pneumophila (strain Paris)</name>
    <dbReference type="NCBI Taxonomy" id="297246"/>
    <lineage>
        <taxon>Bacteria</taxon>
        <taxon>Pseudomonadati</taxon>
        <taxon>Pseudomonadota</taxon>
        <taxon>Gammaproteobacteria</taxon>
        <taxon>Legionellales</taxon>
        <taxon>Legionellaceae</taxon>
        <taxon>Legionella</taxon>
    </lineage>
</organism>
<reference key="1">
    <citation type="journal article" date="2004" name="Nat. Genet.">
        <title>Evidence in the Legionella pneumophila genome for exploitation of host cell functions and high genome plasticity.</title>
        <authorList>
            <person name="Cazalet C."/>
            <person name="Rusniok C."/>
            <person name="Brueggemann H."/>
            <person name="Zidane N."/>
            <person name="Magnier A."/>
            <person name="Ma L."/>
            <person name="Tichit M."/>
            <person name="Jarraud S."/>
            <person name="Bouchier C."/>
            <person name="Vandenesch F."/>
            <person name="Kunst F."/>
            <person name="Etienne J."/>
            <person name="Glaser P."/>
            <person name="Buchrieser C."/>
        </authorList>
    </citation>
    <scope>NUCLEOTIDE SEQUENCE [LARGE SCALE GENOMIC DNA]</scope>
    <source>
        <strain>Paris</strain>
    </source>
</reference>
<keyword id="KW-0975">Bacterial flagellum</keyword>
<keyword id="KW-0998">Cell outer membrane</keyword>
<keyword id="KW-0449">Lipoprotein</keyword>
<keyword id="KW-0472">Membrane</keyword>
<keyword id="KW-0564">Palmitate</keyword>
<keyword id="KW-0732">Signal</keyword>
<dbReference type="EMBL" id="CR628336">
    <property type="protein sequence ID" value="CAH12381.1"/>
    <property type="molecule type" value="Genomic_DNA"/>
</dbReference>
<dbReference type="RefSeq" id="WP_011213580.1">
    <property type="nucleotide sequence ID" value="NC_006368.1"/>
</dbReference>
<dbReference type="SMR" id="Q5X5U0"/>
<dbReference type="KEGG" id="lpp:lpp1230"/>
<dbReference type="LegioList" id="lpp1230"/>
<dbReference type="HOGENOM" id="CLU_069313_0_2_6"/>
<dbReference type="GO" id="GO:0009427">
    <property type="term" value="C:bacterial-type flagellum basal body, distal rod, L ring"/>
    <property type="evidence" value="ECO:0007669"/>
    <property type="project" value="InterPro"/>
</dbReference>
<dbReference type="GO" id="GO:0009279">
    <property type="term" value="C:cell outer membrane"/>
    <property type="evidence" value="ECO:0007669"/>
    <property type="project" value="UniProtKB-SubCell"/>
</dbReference>
<dbReference type="GO" id="GO:0003774">
    <property type="term" value="F:cytoskeletal motor activity"/>
    <property type="evidence" value="ECO:0007669"/>
    <property type="project" value="InterPro"/>
</dbReference>
<dbReference type="GO" id="GO:0071973">
    <property type="term" value="P:bacterial-type flagellum-dependent cell motility"/>
    <property type="evidence" value="ECO:0007669"/>
    <property type="project" value="InterPro"/>
</dbReference>
<dbReference type="HAMAP" id="MF_00415">
    <property type="entry name" value="FlgH"/>
    <property type="match status" value="1"/>
</dbReference>
<dbReference type="InterPro" id="IPR000527">
    <property type="entry name" value="Flag_Lring"/>
</dbReference>
<dbReference type="NCBIfam" id="NF009341">
    <property type="entry name" value="PRK12701.1"/>
    <property type="match status" value="1"/>
</dbReference>
<dbReference type="PANTHER" id="PTHR34933">
    <property type="entry name" value="FLAGELLAR L-RING PROTEIN"/>
    <property type="match status" value="1"/>
</dbReference>
<dbReference type="PANTHER" id="PTHR34933:SF1">
    <property type="entry name" value="FLAGELLAR L-RING PROTEIN"/>
    <property type="match status" value="1"/>
</dbReference>
<dbReference type="Pfam" id="PF02107">
    <property type="entry name" value="FlgH"/>
    <property type="match status" value="1"/>
</dbReference>
<dbReference type="PRINTS" id="PR01008">
    <property type="entry name" value="FLGLRINGFLGH"/>
</dbReference>
<dbReference type="PROSITE" id="PS51257">
    <property type="entry name" value="PROKAR_LIPOPROTEIN"/>
    <property type="match status" value="1"/>
</dbReference>